<reference key="1">
    <citation type="journal article" date="2004" name="Nat. Genet.">
        <title>Comparison of genome degradation in Paratyphi A and Typhi, human-restricted serovars of Salmonella enterica that cause typhoid.</title>
        <authorList>
            <person name="McClelland M."/>
            <person name="Sanderson K.E."/>
            <person name="Clifton S.W."/>
            <person name="Latreille P."/>
            <person name="Porwollik S."/>
            <person name="Sabo A."/>
            <person name="Meyer R."/>
            <person name="Bieri T."/>
            <person name="Ozersky P."/>
            <person name="McLellan M."/>
            <person name="Harkins C.R."/>
            <person name="Wang C."/>
            <person name="Nguyen C."/>
            <person name="Berghoff A."/>
            <person name="Elliott G."/>
            <person name="Kohlberg S."/>
            <person name="Strong C."/>
            <person name="Du F."/>
            <person name="Carter J."/>
            <person name="Kremizki C."/>
            <person name="Layman D."/>
            <person name="Leonard S."/>
            <person name="Sun H."/>
            <person name="Fulton L."/>
            <person name="Nash W."/>
            <person name="Miner T."/>
            <person name="Minx P."/>
            <person name="Delehaunty K."/>
            <person name="Fronick C."/>
            <person name="Magrini V."/>
            <person name="Nhan M."/>
            <person name="Warren W."/>
            <person name="Florea L."/>
            <person name="Spieth J."/>
            <person name="Wilson R.K."/>
        </authorList>
    </citation>
    <scope>NUCLEOTIDE SEQUENCE [LARGE SCALE GENOMIC DNA]</scope>
    <source>
        <strain>ATCC 9150 / SARB42</strain>
    </source>
</reference>
<proteinExistence type="inferred from homology"/>
<name>LPXC_SALPA</name>
<keyword id="KW-0378">Hydrolase</keyword>
<keyword id="KW-0441">Lipid A biosynthesis</keyword>
<keyword id="KW-0444">Lipid biosynthesis</keyword>
<keyword id="KW-0443">Lipid metabolism</keyword>
<keyword id="KW-0479">Metal-binding</keyword>
<keyword id="KW-0862">Zinc</keyword>
<gene>
    <name evidence="1" type="primary">lpxC</name>
    <name type="ordered locus">SPA0136</name>
</gene>
<protein>
    <recommendedName>
        <fullName evidence="1">UDP-3-O-acyl-N-acetylglucosamine deacetylase</fullName>
        <shortName evidence="1">UDP-3-O-acyl-GlcNAc deacetylase</shortName>
        <ecNumber evidence="1">3.5.1.108</ecNumber>
    </recommendedName>
    <alternativeName>
        <fullName evidence="1">UDP-3-O-[R-3-hydroxymyristoyl]-N-acetylglucosamine deacetylase</fullName>
    </alternativeName>
</protein>
<comment type="function">
    <text evidence="1">Catalyzes the hydrolysis of UDP-3-O-myristoyl-N-acetylglucosamine to form UDP-3-O-myristoylglucosamine and acetate, the committed step in lipid A biosynthesis.</text>
</comment>
<comment type="catalytic activity">
    <reaction evidence="1">
        <text>a UDP-3-O-[(3R)-3-hydroxyacyl]-N-acetyl-alpha-D-glucosamine + H2O = a UDP-3-O-[(3R)-3-hydroxyacyl]-alpha-D-glucosamine + acetate</text>
        <dbReference type="Rhea" id="RHEA:67816"/>
        <dbReference type="ChEBI" id="CHEBI:15377"/>
        <dbReference type="ChEBI" id="CHEBI:30089"/>
        <dbReference type="ChEBI" id="CHEBI:137740"/>
        <dbReference type="ChEBI" id="CHEBI:173225"/>
        <dbReference type="EC" id="3.5.1.108"/>
    </reaction>
</comment>
<comment type="cofactor">
    <cofactor evidence="1">
        <name>Zn(2+)</name>
        <dbReference type="ChEBI" id="CHEBI:29105"/>
    </cofactor>
</comment>
<comment type="pathway">
    <text evidence="1">Glycolipid biosynthesis; lipid IV(A) biosynthesis; lipid IV(A) from (3R)-3-hydroxytetradecanoyl-[acyl-carrier-protein] and UDP-N-acetyl-alpha-D-glucosamine: step 2/6.</text>
</comment>
<comment type="similarity">
    <text evidence="1">Belongs to the LpxC family.</text>
</comment>
<feature type="chain" id="PRO_0000191953" description="UDP-3-O-acyl-N-acetylglucosamine deacetylase">
    <location>
        <begin position="1"/>
        <end position="305"/>
    </location>
</feature>
<feature type="active site" description="Proton donor" evidence="1">
    <location>
        <position position="265"/>
    </location>
</feature>
<feature type="binding site" evidence="1">
    <location>
        <position position="79"/>
    </location>
    <ligand>
        <name>Zn(2+)</name>
        <dbReference type="ChEBI" id="CHEBI:29105"/>
    </ligand>
</feature>
<feature type="binding site" evidence="1">
    <location>
        <position position="238"/>
    </location>
    <ligand>
        <name>Zn(2+)</name>
        <dbReference type="ChEBI" id="CHEBI:29105"/>
    </ligand>
</feature>
<feature type="binding site" evidence="1">
    <location>
        <position position="242"/>
    </location>
    <ligand>
        <name>Zn(2+)</name>
        <dbReference type="ChEBI" id="CHEBI:29105"/>
    </ligand>
</feature>
<sequence length="305" mass="33958">MIKQRTLKRIVQATGVGLHTGKKVTLTLRPAPANTGVIYRRTDLNPPVDFPADAKSVRDTMLCTCLVNEHDVRISTVEHLNAALAGLGIDNIVIEVNAPEIPIMDGSAAPFVYLLLDAGIDELNCAKKFVRIKETVRVEDGDKWAEFRPYNGFTLDFTIDFSHPAIDSSSQRYAMNFSADAFMRQISRARTFGFMRDIEYLQSRGLCLGGSFDCAIVVDDYRVLNEDGLRFEDEFVRHKMLDAIGDLFMCGHNIIGAFTAYKSGHALNNKLLQAVLAKQEAWEFVTFQDDAELPLAFKAPSTVLA</sequence>
<dbReference type="EC" id="3.5.1.108" evidence="1"/>
<dbReference type="EMBL" id="CP000026">
    <property type="protein sequence ID" value="AAV76169.1"/>
    <property type="molecule type" value="Genomic_DNA"/>
</dbReference>
<dbReference type="RefSeq" id="WP_000595490.1">
    <property type="nucleotide sequence ID" value="NC_006511.1"/>
</dbReference>
<dbReference type="SMR" id="Q5PDD1"/>
<dbReference type="KEGG" id="spt:SPA0136"/>
<dbReference type="HOGENOM" id="CLU_046528_1_0_6"/>
<dbReference type="UniPathway" id="UPA00359">
    <property type="reaction ID" value="UER00478"/>
</dbReference>
<dbReference type="Proteomes" id="UP000008185">
    <property type="component" value="Chromosome"/>
</dbReference>
<dbReference type="GO" id="GO:0016020">
    <property type="term" value="C:membrane"/>
    <property type="evidence" value="ECO:0007669"/>
    <property type="project" value="GOC"/>
</dbReference>
<dbReference type="GO" id="GO:0046872">
    <property type="term" value="F:metal ion binding"/>
    <property type="evidence" value="ECO:0007669"/>
    <property type="project" value="UniProtKB-KW"/>
</dbReference>
<dbReference type="GO" id="GO:0103117">
    <property type="term" value="F:UDP-3-O-acyl-N-acetylglucosamine deacetylase activity"/>
    <property type="evidence" value="ECO:0007669"/>
    <property type="project" value="UniProtKB-UniRule"/>
</dbReference>
<dbReference type="GO" id="GO:0009245">
    <property type="term" value="P:lipid A biosynthetic process"/>
    <property type="evidence" value="ECO:0007669"/>
    <property type="project" value="UniProtKB-UniRule"/>
</dbReference>
<dbReference type="FunFam" id="3.30.1700.10:FF:000001">
    <property type="entry name" value="UDP-3-O-acyl-N-acetylglucosamine deacetylase"/>
    <property type="match status" value="1"/>
</dbReference>
<dbReference type="FunFam" id="3.30.230.20:FF:000001">
    <property type="entry name" value="UDP-3-O-acyl-N-acetylglucosamine deacetylase"/>
    <property type="match status" value="1"/>
</dbReference>
<dbReference type="Gene3D" id="3.30.230.20">
    <property type="entry name" value="lpxc deacetylase, domain 1"/>
    <property type="match status" value="1"/>
</dbReference>
<dbReference type="Gene3D" id="3.30.1700.10">
    <property type="entry name" value="lpxc deacetylase, domain 2"/>
    <property type="match status" value="1"/>
</dbReference>
<dbReference type="HAMAP" id="MF_00388">
    <property type="entry name" value="LpxC"/>
    <property type="match status" value="1"/>
</dbReference>
<dbReference type="InterPro" id="IPR020568">
    <property type="entry name" value="Ribosomal_Su5_D2-typ_SF"/>
</dbReference>
<dbReference type="InterPro" id="IPR004463">
    <property type="entry name" value="UDP-acyl_GlcNac_deAcase"/>
</dbReference>
<dbReference type="InterPro" id="IPR011334">
    <property type="entry name" value="UDP-acyl_GlcNac_deAcase_C"/>
</dbReference>
<dbReference type="InterPro" id="IPR015870">
    <property type="entry name" value="UDP-acyl_N-AcGlcN_deAcase_N"/>
</dbReference>
<dbReference type="NCBIfam" id="TIGR00325">
    <property type="entry name" value="lpxC"/>
    <property type="match status" value="1"/>
</dbReference>
<dbReference type="PANTHER" id="PTHR33694">
    <property type="entry name" value="UDP-3-O-ACYL-N-ACETYLGLUCOSAMINE DEACETYLASE 1, MITOCHONDRIAL-RELATED"/>
    <property type="match status" value="1"/>
</dbReference>
<dbReference type="PANTHER" id="PTHR33694:SF1">
    <property type="entry name" value="UDP-3-O-ACYL-N-ACETYLGLUCOSAMINE DEACETYLASE 1, MITOCHONDRIAL-RELATED"/>
    <property type="match status" value="1"/>
</dbReference>
<dbReference type="Pfam" id="PF03331">
    <property type="entry name" value="LpxC"/>
    <property type="match status" value="1"/>
</dbReference>
<dbReference type="SUPFAM" id="SSF54211">
    <property type="entry name" value="Ribosomal protein S5 domain 2-like"/>
    <property type="match status" value="2"/>
</dbReference>
<organism>
    <name type="scientific">Salmonella paratyphi A (strain ATCC 9150 / SARB42)</name>
    <dbReference type="NCBI Taxonomy" id="295319"/>
    <lineage>
        <taxon>Bacteria</taxon>
        <taxon>Pseudomonadati</taxon>
        <taxon>Pseudomonadota</taxon>
        <taxon>Gammaproteobacteria</taxon>
        <taxon>Enterobacterales</taxon>
        <taxon>Enterobacteriaceae</taxon>
        <taxon>Salmonella</taxon>
    </lineage>
</organism>
<evidence type="ECO:0000255" key="1">
    <source>
        <dbReference type="HAMAP-Rule" id="MF_00388"/>
    </source>
</evidence>
<accession>Q5PDD1</accession>